<proteinExistence type="inferred from homology"/>
<comment type="catalytic activity">
    <reaction evidence="1">
        <text>2-formamido-N(1)-(5-O-phospho-beta-D-ribosyl)acetamidine + ATP = 5-amino-1-(5-phospho-beta-D-ribosyl)imidazole + ADP + phosphate + H(+)</text>
        <dbReference type="Rhea" id="RHEA:23032"/>
        <dbReference type="ChEBI" id="CHEBI:15378"/>
        <dbReference type="ChEBI" id="CHEBI:30616"/>
        <dbReference type="ChEBI" id="CHEBI:43474"/>
        <dbReference type="ChEBI" id="CHEBI:137981"/>
        <dbReference type="ChEBI" id="CHEBI:147287"/>
        <dbReference type="ChEBI" id="CHEBI:456216"/>
        <dbReference type="EC" id="6.3.3.1"/>
    </reaction>
</comment>
<comment type="pathway">
    <text evidence="1">Purine metabolism; IMP biosynthesis via de novo pathway; 5-amino-1-(5-phospho-D-ribosyl)imidazole from N(2)-formyl-N(1)-(5-phospho-D-ribosyl)glycinamide: step 2/2.</text>
</comment>
<comment type="subcellular location">
    <subcellularLocation>
        <location evidence="1">Cytoplasm</location>
    </subcellularLocation>
</comment>
<comment type="similarity">
    <text evidence="1">Belongs to the AIR synthase family.</text>
</comment>
<organism>
    <name type="scientific">Xanthomonas axonopodis pv. citri (strain 306)</name>
    <dbReference type="NCBI Taxonomy" id="190486"/>
    <lineage>
        <taxon>Bacteria</taxon>
        <taxon>Pseudomonadati</taxon>
        <taxon>Pseudomonadota</taxon>
        <taxon>Gammaproteobacteria</taxon>
        <taxon>Lysobacterales</taxon>
        <taxon>Lysobacteraceae</taxon>
        <taxon>Xanthomonas</taxon>
    </lineage>
</organism>
<accession>Q8PID9</accession>
<reference key="1">
    <citation type="journal article" date="2002" name="Nature">
        <title>Comparison of the genomes of two Xanthomonas pathogens with differing host specificities.</title>
        <authorList>
            <person name="da Silva A.C.R."/>
            <person name="Ferro J.A."/>
            <person name="Reinach F.C."/>
            <person name="Farah C.S."/>
            <person name="Furlan L.R."/>
            <person name="Quaggio R.B."/>
            <person name="Monteiro-Vitorello C.B."/>
            <person name="Van Sluys M.A."/>
            <person name="Almeida N.F. Jr."/>
            <person name="Alves L.M.C."/>
            <person name="do Amaral A.M."/>
            <person name="Bertolini M.C."/>
            <person name="Camargo L.E.A."/>
            <person name="Camarotte G."/>
            <person name="Cannavan F."/>
            <person name="Cardozo J."/>
            <person name="Chambergo F."/>
            <person name="Ciapina L.P."/>
            <person name="Cicarelli R.M.B."/>
            <person name="Coutinho L.L."/>
            <person name="Cursino-Santos J.R."/>
            <person name="El-Dorry H."/>
            <person name="Faria J.B."/>
            <person name="Ferreira A.J.S."/>
            <person name="Ferreira R.C.C."/>
            <person name="Ferro M.I.T."/>
            <person name="Formighieri E.F."/>
            <person name="Franco M.C."/>
            <person name="Greggio C.C."/>
            <person name="Gruber A."/>
            <person name="Katsuyama A.M."/>
            <person name="Kishi L.T."/>
            <person name="Leite R.P."/>
            <person name="Lemos E.G.M."/>
            <person name="Lemos M.V.F."/>
            <person name="Locali E.C."/>
            <person name="Machado M.A."/>
            <person name="Madeira A.M.B.N."/>
            <person name="Martinez-Rossi N.M."/>
            <person name="Martins E.C."/>
            <person name="Meidanis J."/>
            <person name="Menck C.F.M."/>
            <person name="Miyaki C.Y."/>
            <person name="Moon D.H."/>
            <person name="Moreira L.M."/>
            <person name="Novo M.T.M."/>
            <person name="Okura V.K."/>
            <person name="Oliveira M.C."/>
            <person name="Oliveira V.R."/>
            <person name="Pereira H.A."/>
            <person name="Rossi A."/>
            <person name="Sena J.A.D."/>
            <person name="Silva C."/>
            <person name="de Souza R.F."/>
            <person name="Spinola L.A.F."/>
            <person name="Takita M.A."/>
            <person name="Tamura R.E."/>
            <person name="Teixeira E.C."/>
            <person name="Tezza R.I.D."/>
            <person name="Trindade dos Santos M."/>
            <person name="Truffi D."/>
            <person name="Tsai S.M."/>
            <person name="White F.F."/>
            <person name="Setubal J.C."/>
            <person name="Kitajima J.P."/>
        </authorList>
    </citation>
    <scope>NUCLEOTIDE SEQUENCE [LARGE SCALE GENOMIC DNA]</scope>
    <source>
        <strain>306</strain>
    </source>
</reference>
<name>PUR5_XANAC</name>
<keyword id="KW-0067">ATP-binding</keyword>
<keyword id="KW-0963">Cytoplasm</keyword>
<keyword id="KW-0436">Ligase</keyword>
<keyword id="KW-0547">Nucleotide-binding</keyword>
<keyword id="KW-0658">Purine biosynthesis</keyword>
<sequence length="341" mass="35870">MTYRDAGVDIDAGNALVERIKPLVKRSFRPEVMGGLGGFGALFDLSGKYKEPVLVSGTDGVGTKLKLAQQLGRHDTIGIDLVGMCVNDVLVQGAEPLFFLDYFATGKLDVDTAAAVVGGIARGCELSGCALIGGETAEMPDMYPPGEYDLAGFTVGAVEKSQLLDGAQVREGDVLIGIASSGPHSNGYSLIRKIYERAGAPAEHVLDDGTKLIDALMAPTALYVKPVLALLKSHGEAIHAMAHITGGGLTENIIRVIPEGLGLEIDATAWTLPPVFAWLQREGAVADAEMWRTFNCGIGFVLVAAPAQAAALEQALDAQSLAHWRIGQVVTAHGDERVRIG</sequence>
<feature type="chain" id="PRO_0000148274" description="Phosphoribosylformylglycinamidine cyclo-ligase">
    <location>
        <begin position="1"/>
        <end position="341"/>
    </location>
</feature>
<dbReference type="EC" id="6.3.3.1" evidence="1"/>
<dbReference type="EMBL" id="AE008923">
    <property type="protein sequence ID" value="AAM37804.1"/>
    <property type="molecule type" value="Genomic_DNA"/>
</dbReference>
<dbReference type="RefSeq" id="WP_015472438.1">
    <property type="nucleotide sequence ID" value="NC_003919.1"/>
</dbReference>
<dbReference type="SMR" id="Q8PID9"/>
<dbReference type="GeneID" id="66912034"/>
<dbReference type="KEGG" id="xac:XAC2959"/>
<dbReference type="eggNOG" id="COG0150">
    <property type="taxonomic scope" value="Bacteria"/>
</dbReference>
<dbReference type="HOGENOM" id="CLU_047116_0_0_6"/>
<dbReference type="UniPathway" id="UPA00074">
    <property type="reaction ID" value="UER00129"/>
</dbReference>
<dbReference type="Proteomes" id="UP000000576">
    <property type="component" value="Chromosome"/>
</dbReference>
<dbReference type="GO" id="GO:0005829">
    <property type="term" value="C:cytosol"/>
    <property type="evidence" value="ECO:0007669"/>
    <property type="project" value="TreeGrafter"/>
</dbReference>
<dbReference type="GO" id="GO:0005524">
    <property type="term" value="F:ATP binding"/>
    <property type="evidence" value="ECO:0007669"/>
    <property type="project" value="UniProtKB-KW"/>
</dbReference>
<dbReference type="GO" id="GO:0004637">
    <property type="term" value="F:phosphoribosylamine-glycine ligase activity"/>
    <property type="evidence" value="ECO:0007669"/>
    <property type="project" value="TreeGrafter"/>
</dbReference>
<dbReference type="GO" id="GO:0004641">
    <property type="term" value="F:phosphoribosylformylglycinamidine cyclo-ligase activity"/>
    <property type="evidence" value="ECO:0007669"/>
    <property type="project" value="UniProtKB-UniRule"/>
</dbReference>
<dbReference type="GO" id="GO:0006189">
    <property type="term" value="P:'de novo' IMP biosynthetic process"/>
    <property type="evidence" value="ECO:0007669"/>
    <property type="project" value="UniProtKB-UniRule"/>
</dbReference>
<dbReference type="GO" id="GO:0046084">
    <property type="term" value="P:adenine biosynthetic process"/>
    <property type="evidence" value="ECO:0007669"/>
    <property type="project" value="TreeGrafter"/>
</dbReference>
<dbReference type="CDD" id="cd02196">
    <property type="entry name" value="PurM"/>
    <property type="match status" value="1"/>
</dbReference>
<dbReference type="FunFam" id="3.30.1330.10:FF:000001">
    <property type="entry name" value="Phosphoribosylformylglycinamidine cyclo-ligase"/>
    <property type="match status" value="1"/>
</dbReference>
<dbReference type="FunFam" id="3.90.650.10:FF:000001">
    <property type="entry name" value="Phosphoribosylformylglycinamidine cyclo-ligase"/>
    <property type="match status" value="1"/>
</dbReference>
<dbReference type="Gene3D" id="3.90.650.10">
    <property type="entry name" value="PurM-like C-terminal domain"/>
    <property type="match status" value="1"/>
</dbReference>
<dbReference type="Gene3D" id="3.30.1330.10">
    <property type="entry name" value="PurM-like, N-terminal domain"/>
    <property type="match status" value="1"/>
</dbReference>
<dbReference type="HAMAP" id="MF_00741">
    <property type="entry name" value="AIRS"/>
    <property type="match status" value="1"/>
</dbReference>
<dbReference type="InterPro" id="IPR010918">
    <property type="entry name" value="PurM-like_C_dom"/>
</dbReference>
<dbReference type="InterPro" id="IPR036676">
    <property type="entry name" value="PurM-like_C_sf"/>
</dbReference>
<dbReference type="InterPro" id="IPR016188">
    <property type="entry name" value="PurM-like_N"/>
</dbReference>
<dbReference type="InterPro" id="IPR036921">
    <property type="entry name" value="PurM-like_N_sf"/>
</dbReference>
<dbReference type="InterPro" id="IPR004733">
    <property type="entry name" value="PurM_cligase"/>
</dbReference>
<dbReference type="NCBIfam" id="TIGR00878">
    <property type="entry name" value="purM"/>
    <property type="match status" value="1"/>
</dbReference>
<dbReference type="PANTHER" id="PTHR10520:SF12">
    <property type="entry name" value="TRIFUNCTIONAL PURINE BIOSYNTHETIC PROTEIN ADENOSINE-3"/>
    <property type="match status" value="1"/>
</dbReference>
<dbReference type="PANTHER" id="PTHR10520">
    <property type="entry name" value="TRIFUNCTIONAL PURINE BIOSYNTHETIC PROTEIN ADENOSINE-3-RELATED"/>
    <property type="match status" value="1"/>
</dbReference>
<dbReference type="Pfam" id="PF00586">
    <property type="entry name" value="AIRS"/>
    <property type="match status" value="1"/>
</dbReference>
<dbReference type="Pfam" id="PF02769">
    <property type="entry name" value="AIRS_C"/>
    <property type="match status" value="1"/>
</dbReference>
<dbReference type="SUPFAM" id="SSF56042">
    <property type="entry name" value="PurM C-terminal domain-like"/>
    <property type="match status" value="1"/>
</dbReference>
<dbReference type="SUPFAM" id="SSF55326">
    <property type="entry name" value="PurM N-terminal domain-like"/>
    <property type="match status" value="1"/>
</dbReference>
<protein>
    <recommendedName>
        <fullName evidence="1">Phosphoribosylformylglycinamidine cyclo-ligase</fullName>
        <ecNumber evidence="1">6.3.3.1</ecNumber>
    </recommendedName>
    <alternativeName>
        <fullName evidence="1">AIR synthase</fullName>
    </alternativeName>
    <alternativeName>
        <fullName evidence="1">AIRS</fullName>
    </alternativeName>
    <alternativeName>
        <fullName evidence="1">Phosphoribosyl-aminoimidazole synthetase</fullName>
    </alternativeName>
</protein>
<evidence type="ECO:0000255" key="1">
    <source>
        <dbReference type="HAMAP-Rule" id="MF_00741"/>
    </source>
</evidence>
<gene>
    <name evidence="1" type="primary">purM</name>
    <name type="ordered locus">XAC2959</name>
</gene>